<feature type="chain" id="PRO_0000197048" description="Transcriptional activator Myb">
    <location>
        <begin position="1"/>
        <end position="640"/>
    </location>
</feature>
<feature type="domain" description="HTH myb-type 1" evidence="3">
    <location>
        <begin position="35"/>
        <end position="86"/>
    </location>
</feature>
<feature type="domain" description="HTH myb-type 2" evidence="3">
    <location>
        <begin position="87"/>
        <end position="142"/>
    </location>
</feature>
<feature type="domain" description="HTH myb-type 3" evidence="3">
    <location>
        <begin position="143"/>
        <end position="193"/>
    </location>
</feature>
<feature type="DNA-binding region" description="H-T-H motif" evidence="3">
    <location>
        <begin position="63"/>
        <end position="86"/>
    </location>
</feature>
<feature type="DNA-binding region" description="H-T-H motif" evidence="3">
    <location>
        <begin position="115"/>
        <end position="138"/>
    </location>
</feature>
<feature type="DNA-binding region" description="H-T-H motif" evidence="3">
    <location>
        <begin position="166"/>
        <end position="189"/>
    </location>
</feature>
<feature type="region of interest" description="Interaction with HIPK2 and NLK" evidence="1">
    <location>
        <begin position="90"/>
        <end position="193"/>
    </location>
</feature>
<feature type="region of interest" description="Transcription activation domain (PubMed:2189102)" evidence="7">
    <location>
        <begin position="275"/>
        <end position="327"/>
    </location>
</feature>
<feature type="region of interest" description="Negative regulatory domain" evidence="1">
    <location>
        <begin position="328"/>
        <end position="465"/>
    </location>
</feature>
<feature type="region of interest" description="Disordered" evidence="4">
    <location>
        <begin position="336"/>
        <end position="368"/>
    </location>
</feature>
<feature type="region of interest" description="Leucine-zipper">
    <location>
        <begin position="376"/>
        <end position="397"/>
    </location>
</feature>
<feature type="modified residue" description="N6-acetyllysine" evidence="14">
    <location>
        <position position="471"/>
    </location>
</feature>
<feature type="modified residue" description="N6-acetyllysine; alternate" evidence="14">
    <location>
        <position position="480"/>
    </location>
</feature>
<feature type="modified residue" description="Phosphoserine" evidence="15">
    <location>
        <position position="532"/>
    </location>
</feature>
<feature type="modified residue" description="Phosphothreonine" evidence="15">
    <location>
        <position position="534"/>
    </location>
</feature>
<feature type="cross-link" description="Glycyl lysine isopeptide (Lys-Gly) (interchain with G-Cter in SUMO2); alternate" evidence="16">
    <location>
        <position position="480"/>
    </location>
</feature>
<feature type="cross-link" description="Glycyl lysine isopeptide (Lys-Gly) (interchain with G-Cter in SUMO1)" evidence="2">
    <location>
        <position position="503"/>
    </location>
</feature>
<feature type="cross-link" description="Glycyl lysine isopeptide (Lys-Gly) (interchain with G-Cter in SUMO1)" evidence="2">
    <location>
        <position position="527"/>
    </location>
</feature>
<feature type="splice variant" id="VSP_046658" description="In isoform 9." evidence="12">
    <location>
        <begin position="282"/>
        <end position="316"/>
    </location>
</feature>
<feature type="splice variant" id="VSP_003293" description="In isoform 2 and isoform 7." evidence="9 10 12">
    <location>
        <begin position="314"/>
        <end position="316"/>
    </location>
</feature>
<feature type="splice variant" id="VSP_053389" description="In isoform 12." evidence="11">
    <original>TQNHTCSYPGWHSTTIADHTRPHGDSAPVSCLGEHHSTPSLPADPGSLPEESASPARCMIVHQGTILDNVKNLLEFAETLQFIDSFLNTSSNHENSDLEMPSLTSTPLIGHKLTVTTPFHRDQTVKTQKENTVFRTPAIKRSILESSPRTPTPFKHALAAQEIKYGPLKMLPQTPSHLVEDLQDVIKQESDESGIVAEFQENGPPLLKKIKQEVESPTDKSGNFFCSHHWEGDSLNTQLFTQTSPVADAPNILTSSVLMAPASEDEDNVLKAFTVPKNRSLASPLQPCSSTWEPASCGKMEEQMTSSSQARKYVNAFSARTLVM</original>
    <variation>VRLSSCA</variation>
    <location>
        <begin position="317"/>
        <end position="640"/>
    </location>
</feature>
<feature type="splice variant" id="VSP_046659" description="In isoform 11." evidence="12">
    <location>
        <begin position="317"/>
        <end position="401"/>
    </location>
</feature>
<feature type="splice variant" id="VSP_003294" description="In isoform 3." evidence="13">
    <original>TQNHTCSYPGWHSTTIADHTRPHGDSAPVSCLGE</original>
    <variation>LCGPLLNSDIFSDWAANWDGSLCFATYIVNQQRQ</variation>
    <location>
        <begin position="317"/>
        <end position="350"/>
    </location>
</feature>
<feature type="splice variant" id="VSP_003295" description="In isoform 3." evidence="13">
    <location>
        <begin position="351"/>
        <end position="640"/>
    </location>
</feature>
<feature type="splice variant" id="VSP_046660" description="In isoform 8." evidence="12">
    <original>VKNLLEFAETLQFIDS</original>
    <variation>DSSSWCDLSSFEFFEEADFSPSQHHTGKALQLQQREGNGTKPAGEPSPRVNKRMLSESSLDPPKVLPPARHSTIPLVILRKKRGQASPLATGDCSSFIFADVSSSTPKRSPVKSLPFSPSQ</variation>
    <location>
        <begin position="386"/>
        <end position="401"/>
    </location>
</feature>
<feature type="splice variant" id="VSP_003296" description="In isoform 4 and isoform 7." evidence="9 12">
    <original>S</original>
    <variation>SDSSSWCDLSSFEFFEEADFSPSQHHTGKALQLQQREGNGTKPAGEPSPRVNKRMLSESSLDPPKVLPPARHSTIPLVILRKKRGQASPLATGDCSSFIFADVSSSTPKRSPVKSLPFSPSQ</variation>
    <location>
        <position position="401"/>
    </location>
</feature>
<feature type="splice variant" id="VSP_003297" description="In isoform 5." evidence="13">
    <original>F</original>
    <variation>M</variation>
    <location>
        <position position="402"/>
    </location>
</feature>
<feature type="splice variant" id="VSP_003298" description="In isoform 5." evidence="13">
    <location>
        <begin position="403"/>
        <end position="640"/>
    </location>
</feature>
<feature type="splice variant" id="VSP_046661" description="In isoform 10." evidence="12">
    <location>
        <begin position="530"/>
        <end position="566"/>
    </location>
</feature>
<feature type="splice variant" id="VSP_003299" description="In isoform 6." evidence="13">
    <original>NILTSSVLMAPASEDEDNVLKAFTVPKNRSLASPLQPCSSTWEPASCGKMEEQMTSSSQARKYVNAFSARTLVM</original>
    <variation>TGVQWHDFGSLQPLPPGFKRFSCLSLPRSWDYRHPPPRPANFEFLVETGFLHVGQAGLELLTSGDLPASASQSARITGVSHRARPEYSYKLRFNGTSIRR</variation>
    <location>
        <begin position="567"/>
        <end position="640"/>
    </location>
</feature>
<feature type="sequence variant" id="VAR_050188" description="In dbSNP:rs2229999.">
    <original>T</original>
    <variation>I</variation>
    <location>
        <position position="336"/>
    </location>
</feature>
<feature type="sequence variant" id="VAR_050189" description="In dbSNP:rs2230000.">
    <original>T</original>
    <variation>N</variation>
    <location>
        <position position="422"/>
    </location>
</feature>
<feature type="sequence conflict" description="In Ref. 1; AAA52032 and 6; AY787447/AY787448." evidence="13" ref="1 6">
    <original>I</original>
    <variation>F</variation>
    <location>
        <position position="511"/>
    </location>
</feature>
<feature type="sequence conflict" description="In Ref. 1; AAA52032 and 6; AY787447/AY787448." evidence="13" ref="1 6">
    <original>A</original>
    <variation>R</variation>
    <location>
        <position position="563"/>
    </location>
</feature>
<feature type="sequence conflict" description="In Ref. 8; CAA35503." evidence="13" ref="8">
    <original>L</original>
    <variation>F</variation>
    <location sequence="P10242-4">
        <position position="433"/>
    </location>
</feature>
<gene>
    <name type="primary">MYB</name>
</gene>
<keyword id="KW-0007">Acetylation</keyword>
<keyword id="KW-0010">Activator</keyword>
<keyword id="KW-0025">Alternative splicing</keyword>
<keyword id="KW-0238">DNA-binding</keyword>
<keyword id="KW-1017">Isopeptide bond</keyword>
<keyword id="KW-0539">Nucleus</keyword>
<keyword id="KW-0597">Phosphoprotein</keyword>
<keyword id="KW-1267">Proteomics identification</keyword>
<keyword id="KW-0656">Proto-oncogene</keyword>
<keyword id="KW-1185">Reference proteome</keyword>
<keyword id="KW-0677">Repeat</keyword>
<keyword id="KW-0804">Transcription</keyword>
<keyword id="KW-0805">Transcription regulation</keyword>
<keyword id="KW-0832">Ubl conjugation</keyword>
<proteinExistence type="evidence at protein level"/>
<dbReference type="EMBL" id="M15024">
    <property type="protein sequence ID" value="AAA52032.1"/>
    <property type="molecule type" value="mRNA"/>
</dbReference>
<dbReference type="EMBL" id="X52125">
    <property type="protein sequence ID" value="CAA36371.1"/>
    <property type="molecule type" value="mRNA"/>
</dbReference>
<dbReference type="EMBL" id="AJ606319">
    <property type="protein sequence ID" value="CAE55170.1"/>
    <property type="molecule type" value="mRNA"/>
</dbReference>
<dbReference type="EMBL" id="AJ606320">
    <property type="protein sequence ID" value="CAE55171.1"/>
    <property type="molecule type" value="mRNA"/>
</dbReference>
<dbReference type="EMBL" id="AJ616791">
    <property type="protein sequence ID" value="CAF04482.1"/>
    <property type="molecule type" value="mRNA"/>
</dbReference>
<dbReference type="EMBL" id="AJ616791">
    <property type="protein sequence ID" value="CAF04479.1"/>
    <property type="molecule type" value="mRNA"/>
</dbReference>
<dbReference type="EMBL" id="U22376">
    <property type="protein sequence ID" value="AAB49034.1"/>
    <property type="molecule type" value="Genomic_DNA"/>
</dbReference>
<dbReference type="EMBL" id="U22376">
    <property type="protein sequence ID" value="AAB49035.1"/>
    <property type="molecule type" value="Genomic_DNA"/>
</dbReference>
<dbReference type="EMBL" id="U22376">
    <property type="protein sequence ID" value="AAB49036.1"/>
    <property type="molecule type" value="Genomic_DNA"/>
</dbReference>
<dbReference type="EMBL" id="U22376">
    <property type="protein sequence ID" value="AAB49037.1"/>
    <property type="molecule type" value="Genomic_DNA"/>
</dbReference>
<dbReference type="EMBL" id="U22376">
    <property type="protein sequence ID" value="AAB49038.1"/>
    <property type="molecule type" value="Genomic_DNA"/>
</dbReference>
<dbReference type="EMBL" id="U22376">
    <property type="protein sequence ID" value="AAB49039.1"/>
    <property type="molecule type" value="Genomic_DNA"/>
</dbReference>
<dbReference type="EMBL" id="AF104863">
    <property type="protein sequence ID" value="AAC96326.1"/>
    <property type="molecule type" value="mRNA"/>
</dbReference>
<dbReference type="EMBL" id="AY787443">
    <property type="status" value="NOT_ANNOTATED_CDS"/>
    <property type="molecule type" value="mRNA"/>
</dbReference>
<dbReference type="EMBL" id="AY787447">
    <property type="status" value="NOT_ANNOTATED_CDS"/>
    <property type="molecule type" value="mRNA"/>
</dbReference>
<dbReference type="EMBL" id="AY787448">
    <property type="status" value="NOT_ANNOTATED_CDS"/>
    <property type="molecule type" value="mRNA"/>
</dbReference>
<dbReference type="EMBL" id="AY787461">
    <property type="status" value="NOT_ANNOTATED_CDS"/>
    <property type="molecule type" value="mRNA"/>
</dbReference>
<dbReference type="EMBL" id="AY787468">
    <property type="status" value="NOT_ANNOTATED_CDS"/>
    <property type="molecule type" value="mRNA"/>
</dbReference>
<dbReference type="EMBL" id="AL023693">
    <property type="status" value="NOT_ANNOTATED_CDS"/>
    <property type="molecule type" value="Genomic_DNA"/>
</dbReference>
<dbReference type="EMBL" id="CH471051">
    <property type="protein sequence ID" value="EAW47969.1"/>
    <property type="molecule type" value="Genomic_DNA"/>
</dbReference>
<dbReference type="EMBL" id="CH471051">
    <property type="protein sequence ID" value="EAW47973.1"/>
    <property type="molecule type" value="Genomic_DNA"/>
</dbReference>
<dbReference type="EMBL" id="BC064955">
    <property type="protein sequence ID" value="AAH64955.1"/>
    <property type="molecule type" value="mRNA"/>
</dbReference>
<dbReference type="EMBL" id="M13665">
    <property type="protein sequence ID" value="AAA52030.1"/>
    <property type="molecule type" value="mRNA"/>
</dbReference>
<dbReference type="EMBL" id="M13666">
    <property type="protein sequence ID" value="AAA52031.1"/>
    <property type="molecule type" value="mRNA"/>
</dbReference>
<dbReference type="EMBL" id="X17469">
    <property type="protein sequence ID" value="CAA35503.1"/>
    <property type="molecule type" value="mRNA"/>
</dbReference>
<dbReference type="CCDS" id="CCDS47481.1">
    <molecule id="P10242-4"/>
</dbReference>
<dbReference type="CCDS" id="CCDS47482.1">
    <molecule id="P10242-2"/>
</dbReference>
<dbReference type="CCDS" id="CCDS5174.1">
    <molecule id="P10242-1"/>
</dbReference>
<dbReference type="CCDS" id="CCDS55058.1">
    <molecule id="P10242-7"/>
</dbReference>
<dbReference type="CCDS" id="CCDS55059.1">
    <molecule id="P10242-8"/>
</dbReference>
<dbReference type="CCDS" id="CCDS55060.1">
    <molecule id="P10242-10"/>
</dbReference>
<dbReference type="CCDS" id="CCDS55061.1">
    <molecule id="P10242-11"/>
</dbReference>
<dbReference type="CCDS" id="CCDS55062.1">
    <molecule id="P10242-9"/>
</dbReference>
<dbReference type="PIR" id="A26661">
    <property type="entry name" value="TVHUMB"/>
</dbReference>
<dbReference type="RefSeq" id="NP_001123644.1">
    <molecule id="P10242-2"/>
    <property type="nucleotide sequence ID" value="NM_001130172.2"/>
</dbReference>
<dbReference type="RefSeq" id="NP_001123645.1">
    <molecule id="P10242-4"/>
    <property type="nucleotide sequence ID" value="NM_001130173.2"/>
</dbReference>
<dbReference type="RefSeq" id="NP_001155128.1">
    <molecule id="P10242-7"/>
    <property type="nucleotide sequence ID" value="NM_001161656.2"/>
</dbReference>
<dbReference type="RefSeq" id="NP_001155129.1">
    <molecule id="P10242-11"/>
    <property type="nucleotide sequence ID" value="NM_001161657.2"/>
</dbReference>
<dbReference type="RefSeq" id="NP_001155130.1">
    <molecule id="P10242-8"/>
    <property type="nucleotide sequence ID" value="NM_001161658.2"/>
</dbReference>
<dbReference type="RefSeq" id="NP_001155131.1">
    <molecule id="P10242-10"/>
    <property type="nucleotide sequence ID" value="NM_001161659.2"/>
</dbReference>
<dbReference type="RefSeq" id="NP_001155132.1">
    <molecule id="P10242-9"/>
    <property type="nucleotide sequence ID" value="NM_001161660.2"/>
</dbReference>
<dbReference type="RefSeq" id="NP_005366.2">
    <molecule id="P10242-1"/>
    <property type="nucleotide sequence ID" value="NM_005375.3"/>
</dbReference>
<dbReference type="SMR" id="P10242"/>
<dbReference type="BioGRID" id="110687">
    <property type="interactions" value="186"/>
</dbReference>
<dbReference type="ComplexPortal" id="CPX-504">
    <property type="entry name" value="c-Myb-C/EBPbeta complex"/>
</dbReference>
<dbReference type="DIP" id="DIP-1057N"/>
<dbReference type="ELM" id="P10242"/>
<dbReference type="FunCoup" id="P10242">
    <property type="interactions" value="3343"/>
</dbReference>
<dbReference type="IntAct" id="P10242">
    <property type="interactions" value="97"/>
</dbReference>
<dbReference type="MINT" id="P10242"/>
<dbReference type="STRING" id="9606.ENSP00000339992"/>
<dbReference type="BindingDB" id="P10242"/>
<dbReference type="ChEMBL" id="CHEMBL5169115"/>
<dbReference type="DrugBank" id="DB06359">
    <property type="generic name" value="G4460"/>
</dbReference>
<dbReference type="iPTMnet" id="P10242"/>
<dbReference type="PhosphoSitePlus" id="P10242"/>
<dbReference type="BioMuta" id="MYB"/>
<dbReference type="DMDM" id="2815504"/>
<dbReference type="jPOST" id="P10242"/>
<dbReference type="MassIVE" id="P10242"/>
<dbReference type="PeptideAtlas" id="P10242"/>
<dbReference type="ProteomicsDB" id="20651"/>
<dbReference type="ProteomicsDB" id="21951"/>
<dbReference type="ProteomicsDB" id="22356"/>
<dbReference type="ProteomicsDB" id="22452"/>
<dbReference type="ProteomicsDB" id="23398"/>
<dbReference type="ProteomicsDB" id="52578">
    <molecule id="P10242-1"/>
</dbReference>
<dbReference type="ProteomicsDB" id="52579">
    <molecule id="P10242-2"/>
</dbReference>
<dbReference type="ProteomicsDB" id="52580">
    <molecule id="P10242-3"/>
</dbReference>
<dbReference type="ProteomicsDB" id="52581">
    <molecule id="P10242-4"/>
</dbReference>
<dbReference type="ProteomicsDB" id="52582">
    <molecule id="P10242-5"/>
</dbReference>
<dbReference type="ProteomicsDB" id="52583">
    <molecule id="P10242-6"/>
</dbReference>
<dbReference type="Pumba" id="P10242"/>
<dbReference type="Antibodypedia" id="4486">
    <property type="antibodies" value="941 antibodies from 43 providers"/>
</dbReference>
<dbReference type="DNASU" id="4602"/>
<dbReference type="Ensembl" id="ENST00000341911.10">
    <molecule id="P10242-4"/>
    <property type="protein sequence ID" value="ENSP00000339992.5"/>
    <property type="gene ID" value="ENSG00000118513.21"/>
</dbReference>
<dbReference type="Ensembl" id="ENST00000367812.6">
    <molecule id="P10242-6"/>
    <property type="protein sequence ID" value="ENSP00000356786.2"/>
    <property type="gene ID" value="ENSG00000118513.21"/>
</dbReference>
<dbReference type="Ensembl" id="ENST00000367814.8">
    <molecule id="P10242-1"/>
    <property type="protein sequence ID" value="ENSP00000356788.4"/>
    <property type="gene ID" value="ENSG00000118513.21"/>
</dbReference>
<dbReference type="Ensembl" id="ENST00000442647.7">
    <molecule id="P10242-2"/>
    <property type="protein sequence ID" value="ENSP00000410825.2"/>
    <property type="gene ID" value="ENSG00000118513.21"/>
</dbReference>
<dbReference type="Ensembl" id="ENST00000525369.5">
    <molecule id="P10242-11"/>
    <property type="protein sequence ID" value="ENSP00000435938.1"/>
    <property type="gene ID" value="ENSG00000118513.21"/>
</dbReference>
<dbReference type="Ensembl" id="ENST00000525477.5">
    <molecule id="P10242-3"/>
    <property type="protein sequence ID" value="ENSP00000437081.1"/>
    <property type="gene ID" value="ENSG00000118513.21"/>
</dbReference>
<dbReference type="Ensembl" id="ENST00000525514.5">
    <molecule id="P10242-3"/>
    <property type="protein sequence ID" value="ENSP00000435578.1"/>
    <property type="gene ID" value="ENSG00000118513.21"/>
</dbReference>
<dbReference type="Ensembl" id="ENST00000528774.5">
    <molecule id="P10242-7"/>
    <property type="protein sequence ID" value="ENSP00000434723.1"/>
    <property type="gene ID" value="ENSG00000118513.21"/>
</dbReference>
<dbReference type="Ensembl" id="ENST00000529586.5">
    <molecule id="P10242-3"/>
    <property type="protein sequence ID" value="ENSP00000437264.1"/>
    <property type="gene ID" value="ENSG00000118513.21"/>
</dbReference>
<dbReference type="Ensembl" id="ENST00000533384.5">
    <molecule id="P10242-5"/>
    <property type="protein sequence ID" value="ENSP00000432811.1"/>
    <property type="gene ID" value="ENSG00000118513.21"/>
</dbReference>
<dbReference type="Ensembl" id="ENST00000533624.5">
    <molecule id="P10242-9"/>
    <property type="protein sequence ID" value="ENSP00000436605.1"/>
    <property type="gene ID" value="ENSG00000118513.21"/>
</dbReference>
<dbReference type="Ensembl" id="ENST00000533808.5">
    <molecule id="P10242-5"/>
    <property type="protein sequence ID" value="ENSP00000435293.1"/>
    <property type="gene ID" value="ENSG00000118513.21"/>
</dbReference>
<dbReference type="Ensembl" id="ENST00000533837.5">
    <molecule id="P10242-5"/>
    <property type="protein sequence ID" value="ENSP00000434639.1"/>
    <property type="gene ID" value="ENSG00000118513.21"/>
</dbReference>
<dbReference type="Ensembl" id="ENST00000534044.5">
    <molecule id="P10242-10"/>
    <property type="protein sequence ID" value="ENSP00000435055.1"/>
    <property type="gene ID" value="ENSG00000118513.21"/>
</dbReference>
<dbReference type="Ensembl" id="ENST00000534121.5">
    <molecule id="P10242-8"/>
    <property type="protein sequence ID" value="ENSP00000432851.1"/>
    <property type="gene ID" value="ENSG00000118513.21"/>
</dbReference>
<dbReference type="GeneID" id="4602"/>
<dbReference type="KEGG" id="hsa:4602"/>
<dbReference type="MANE-Select" id="ENST00000341911.10">
    <molecule id="P10242-4"/>
    <property type="protein sequence ID" value="ENSP00000339992.5"/>
    <property type="RefSeq nucleotide sequence ID" value="NM_001130173.2"/>
    <property type="RefSeq protein sequence ID" value="NP_001123645.1"/>
</dbReference>
<dbReference type="UCSC" id="uc003qfh.4">
    <molecule id="P10242-1"/>
    <property type="organism name" value="human"/>
</dbReference>
<dbReference type="AGR" id="HGNC:7545"/>
<dbReference type="CTD" id="4602"/>
<dbReference type="DisGeNET" id="4602"/>
<dbReference type="GeneCards" id="MYB"/>
<dbReference type="HGNC" id="HGNC:7545">
    <property type="gene designation" value="MYB"/>
</dbReference>
<dbReference type="HPA" id="ENSG00000118513">
    <property type="expression patterns" value="Group enriched (bone marrow, breast, intestine, lymphoid tissue)"/>
</dbReference>
<dbReference type="MalaCards" id="MYB"/>
<dbReference type="MIM" id="189990">
    <property type="type" value="gene"/>
</dbReference>
<dbReference type="neXtProt" id="NX_P10242"/>
<dbReference type="OpenTargets" id="ENSG00000118513"/>
<dbReference type="Orphanet" id="86849">
    <property type="disease" value="Acute basophilic leukemia"/>
</dbReference>
<dbReference type="Orphanet" id="251671">
    <property type="disease" value="Angiocentric glioma"/>
</dbReference>
<dbReference type="Orphanet" id="99861">
    <property type="disease" value="Precursor T-cell acute lymphoblastic leukemia"/>
</dbReference>
<dbReference type="PharmGKB" id="PA31345"/>
<dbReference type="VEuPathDB" id="HostDB:ENSG00000118513"/>
<dbReference type="eggNOG" id="KOG0048">
    <property type="taxonomic scope" value="Eukaryota"/>
</dbReference>
<dbReference type="GeneTree" id="ENSGT00940000156248"/>
<dbReference type="HOGENOM" id="CLU_015440_2_1_1"/>
<dbReference type="InParanoid" id="P10242"/>
<dbReference type="OMA" id="WEPATCG"/>
<dbReference type="OrthoDB" id="2143914at2759"/>
<dbReference type="PAN-GO" id="P10242">
    <property type="GO annotations" value="5 GO annotations based on evolutionary models"/>
</dbReference>
<dbReference type="PhylomeDB" id="P10242"/>
<dbReference type="TreeFam" id="TF326257"/>
<dbReference type="PathwayCommons" id="P10242"/>
<dbReference type="Reactome" id="R-HSA-8939236">
    <property type="pathway name" value="RUNX1 regulates transcription of genes involved in differentiation of HSCs"/>
</dbReference>
<dbReference type="Reactome" id="R-HSA-9018519">
    <property type="pathway name" value="Estrogen-dependent gene expression"/>
</dbReference>
<dbReference type="Reactome" id="R-HSA-9616222">
    <property type="pathway name" value="Transcriptional regulation of granulopoiesis"/>
</dbReference>
<dbReference type="Reactome" id="R-HSA-983231">
    <property type="pathway name" value="Factors involved in megakaryocyte development and platelet production"/>
</dbReference>
<dbReference type="Reactome" id="R-HSA-9834899">
    <property type="pathway name" value="Specification of the neural plate border"/>
</dbReference>
<dbReference type="SignaLink" id="P10242"/>
<dbReference type="SIGNOR" id="P10242"/>
<dbReference type="BioGRID-ORCS" id="4602">
    <property type="hits" value="119 hits in 1196 CRISPR screens"/>
</dbReference>
<dbReference type="CD-CODE" id="B5B9A610">
    <property type="entry name" value="PML body"/>
</dbReference>
<dbReference type="ChiTaRS" id="MYB">
    <property type="organism name" value="human"/>
</dbReference>
<dbReference type="GeneWiki" id="MYB_(gene)"/>
<dbReference type="GenomeRNAi" id="4602"/>
<dbReference type="Pharos" id="P10242">
    <property type="development level" value="Tbio"/>
</dbReference>
<dbReference type="PRO" id="PR:P10242"/>
<dbReference type="Proteomes" id="UP000005640">
    <property type="component" value="Chromosome 6"/>
</dbReference>
<dbReference type="RNAct" id="P10242">
    <property type="molecule type" value="protein"/>
</dbReference>
<dbReference type="Bgee" id="ENSG00000118513">
    <property type="expression patterns" value="Expressed in mucosa of sigmoid colon and 125 other cell types or tissues"/>
</dbReference>
<dbReference type="ExpressionAtlas" id="P10242">
    <property type="expression patterns" value="baseline and differential"/>
</dbReference>
<dbReference type="GO" id="GO:0005829">
    <property type="term" value="C:cytosol"/>
    <property type="evidence" value="ECO:0000314"/>
    <property type="project" value="HPA"/>
</dbReference>
<dbReference type="GO" id="GO:0016363">
    <property type="term" value="C:nuclear matrix"/>
    <property type="evidence" value="ECO:0000303"/>
    <property type="project" value="UniProtKB"/>
</dbReference>
<dbReference type="GO" id="GO:0005654">
    <property type="term" value="C:nucleoplasm"/>
    <property type="evidence" value="ECO:0000314"/>
    <property type="project" value="HPA"/>
</dbReference>
<dbReference type="GO" id="GO:0005634">
    <property type="term" value="C:nucleus"/>
    <property type="evidence" value="ECO:0000318"/>
    <property type="project" value="GO_Central"/>
</dbReference>
<dbReference type="GO" id="GO:0090575">
    <property type="term" value="C:RNA polymerase II transcription regulator complex"/>
    <property type="evidence" value="ECO:0000269"/>
    <property type="project" value="ComplexPortal"/>
</dbReference>
<dbReference type="GO" id="GO:0001228">
    <property type="term" value="F:DNA-binding transcription activator activity, RNA polymerase II-specific"/>
    <property type="evidence" value="ECO:0000314"/>
    <property type="project" value="NTNU_SB"/>
</dbReference>
<dbReference type="GO" id="GO:0000981">
    <property type="term" value="F:DNA-binding transcription factor activity, RNA polymerase II-specific"/>
    <property type="evidence" value="ECO:0000318"/>
    <property type="project" value="GO_Central"/>
</dbReference>
<dbReference type="GO" id="GO:0000978">
    <property type="term" value="F:RNA polymerase II cis-regulatory region sequence-specific DNA binding"/>
    <property type="evidence" value="ECO:0000314"/>
    <property type="project" value="BHF-UCL"/>
</dbReference>
<dbReference type="GO" id="GO:0071987">
    <property type="term" value="F:WD40-repeat domain binding"/>
    <property type="evidence" value="ECO:0007669"/>
    <property type="project" value="Ensembl"/>
</dbReference>
<dbReference type="GO" id="GO:0030183">
    <property type="term" value="P:B cell differentiation"/>
    <property type="evidence" value="ECO:0007669"/>
    <property type="project" value="Ensembl"/>
</dbReference>
<dbReference type="GO" id="GO:0006816">
    <property type="term" value="P:calcium ion transport"/>
    <property type="evidence" value="ECO:0007669"/>
    <property type="project" value="Ensembl"/>
</dbReference>
<dbReference type="GO" id="GO:0070301">
    <property type="term" value="P:cellular response to hydrogen peroxide"/>
    <property type="evidence" value="ECO:0007669"/>
    <property type="project" value="Ensembl"/>
</dbReference>
<dbReference type="GO" id="GO:0071354">
    <property type="term" value="P:cellular response to interleukin-6"/>
    <property type="evidence" value="ECO:0007669"/>
    <property type="project" value="Ensembl"/>
</dbReference>
<dbReference type="GO" id="GO:1990830">
    <property type="term" value="P:cellular response to leukemia inhibitory factor"/>
    <property type="evidence" value="ECO:0007669"/>
    <property type="project" value="Ensembl"/>
</dbReference>
<dbReference type="GO" id="GO:0071300">
    <property type="term" value="P:cellular response to retinoic acid"/>
    <property type="evidence" value="ECO:0007669"/>
    <property type="project" value="Ensembl"/>
</dbReference>
<dbReference type="GO" id="GO:0048566">
    <property type="term" value="P:embryonic digestive tract development"/>
    <property type="evidence" value="ECO:0007669"/>
    <property type="project" value="Ensembl"/>
</dbReference>
<dbReference type="GO" id="GO:0030218">
    <property type="term" value="P:erythrocyte differentiation"/>
    <property type="evidence" value="ECO:0000315"/>
    <property type="project" value="BHF-UCL"/>
</dbReference>
<dbReference type="GO" id="GO:0000082">
    <property type="term" value="P:G1/S transition of mitotic cell cycle"/>
    <property type="evidence" value="ECO:0007669"/>
    <property type="project" value="Ensembl"/>
</dbReference>
<dbReference type="GO" id="GO:0001701">
    <property type="term" value="P:in utero embryonic development"/>
    <property type="evidence" value="ECO:0007669"/>
    <property type="project" value="Ensembl"/>
</dbReference>
<dbReference type="GO" id="GO:0000278">
    <property type="term" value="P:mitotic cell cycle"/>
    <property type="evidence" value="ECO:0000318"/>
    <property type="project" value="GO_Central"/>
</dbReference>
<dbReference type="GO" id="GO:0061515">
    <property type="term" value="P:myeloid cell development"/>
    <property type="evidence" value="ECO:0000303"/>
    <property type="project" value="ComplexPortal"/>
</dbReference>
<dbReference type="GO" id="GO:0045892">
    <property type="term" value="P:negative regulation of DNA-templated transcription"/>
    <property type="evidence" value="ECO:0000315"/>
    <property type="project" value="BHF-UCL"/>
</dbReference>
<dbReference type="GO" id="GO:1901533">
    <property type="term" value="P:negative regulation of hematopoietic progenitor cell differentiation"/>
    <property type="evidence" value="ECO:0000315"/>
    <property type="project" value="ARUK-UCL"/>
</dbReference>
<dbReference type="GO" id="GO:0045653">
    <property type="term" value="P:negative regulation of megakaryocyte differentiation"/>
    <property type="evidence" value="ECO:0000315"/>
    <property type="project" value="BHF-UCL"/>
</dbReference>
<dbReference type="GO" id="GO:0000122">
    <property type="term" value="P:negative regulation of transcription by RNA polymerase II"/>
    <property type="evidence" value="ECO:0000315"/>
    <property type="project" value="BHF-UCL"/>
</dbReference>
<dbReference type="GO" id="GO:0032967">
    <property type="term" value="P:positive regulation of collagen biosynthetic process"/>
    <property type="evidence" value="ECO:0007669"/>
    <property type="project" value="Ensembl"/>
</dbReference>
<dbReference type="GO" id="GO:0045893">
    <property type="term" value="P:positive regulation of DNA-templated transcription"/>
    <property type="evidence" value="ECO:0000315"/>
    <property type="project" value="BHF-UCL"/>
</dbReference>
<dbReference type="GO" id="GO:0060252">
    <property type="term" value="P:positive regulation of glial cell proliferation"/>
    <property type="evidence" value="ECO:0007669"/>
    <property type="project" value="Ensembl"/>
</dbReference>
<dbReference type="GO" id="GO:2000491">
    <property type="term" value="P:positive regulation of hepatic stellate cell activation"/>
    <property type="evidence" value="ECO:0007669"/>
    <property type="project" value="Ensembl"/>
</dbReference>
<dbReference type="GO" id="GO:1904899">
    <property type="term" value="P:positive regulation of hepatic stellate cell proliferation"/>
    <property type="evidence" value="ECO:0007669"/>
    <property type="project" value="Ensembl"/>
</dbReference>
<dbReference type="GO" id="GO:1902895">
    <property type="term" value="P:positive regulation of miRNA transcription"/>
    <property type="evidence" value="ECO:0000314"/>
    <property type="project" value="BHF-UCL"/>
</dbReference>
<dbReference type="GO" id="GO:0043525">
    <property type="term" value="P:positive regulation of neuron apoptotic process"/>
    <property type="evidence" value="ECO:0007669"/>
    <property type="project" value="Ensembl"/>
</dbReference>
<dbReference type="GO" id="GO:0048661">
    <property type="term" value="P:positive regulation of smooth muscle cell proliferation"/>
    <property type="evidence" value="ECO:0007669"/>
    <property type="project" value="Ensembl"/>
</dbReference>
<dbReference type="GO" id="GO:2000845">
    <property type="term" value="P:positive regulation of testosterone secretion"/>
    <property type="evidence" value="ECO:0007669"/>
    <property type="project" value="Ensembl"/>
</dbReference>
<dbReference type="GO" id="GO:0045944">
    <property type="term" value="P:positive regulation of transcription by RNA polymerase II"/>
    <property type="evidence" value="ECO:0000314"/>
    <property type="project" value="UniProtKB"/>
</dbReference>
<dbReference type="GO" id="GO:0071636">
    <property type="term" value="P:positive regulation of transforming growth factor beta production"/>
    <property type="evidence" value="ECO:0007669"/>
    <property type="project" value="Ensembl"/>
</dbReference>
<dbReference type="GO" id="GO:0006355">
    <property type="term" value="P:regulation of DNA-templated transcription"/>
    <property type="evidence" value="ECO:0000303"/>
    <property type="project" value="UniProtKB"/>
</dbReference>
<dbReference type="GO" id="GO:0001666">
    <property type="term" value="P:response to hypoxia"/>
    <property type="evidence" value="ECO:0007669"/>
    <property type="project" value="Ensembl"/>
</dbReference>
<dbReference type="GO" id="GO:0002931">
    <property type="term" value="P:response to ischemia"/>
    <property type="evidence" value="ECO:0007669"/>
    <property type="project" value="Ensembl"/>
</dbReference>
<dbReference type="GO" id="GO:0014856">
    <property type="term" value="P:skeletal muscle cell proliferation"/>
    <property type="evidence" value="ECO:0007669"/>
    <property type="project" value="Ensembl"/>
</dbReference>
<dbReference type="GO" id="GO:0048536">
    <property type="term" value="P:spleen development"/>
    <property type="evidence" value="ECO:0007669"/>
    <property type="project" value="Ensembl"/>
</dbReference>
<dbReference type="GO" id="GO:0017145">
    <property type="term" value="P:stem cell division"/>
    <property type="evidence" value="ECO:0007669"/>
    <property type="project" value="Ensembl"/>
</dbReference>
<dbReference type="GO" id="GO:0045064">
    <property type="term" value="P:T-helper 2 cell differentiation"/>
    <property type="evidence" value="ECO:0000315"/>
    <property type="project" value="UniProtKB"/>
</dbReference>
<dbReference type="GO" id="GO:0048538">
    <property type="term" value="P:thymus development"/>
    <property type="evidence" value="ECO:0007669"/>
    <property type="project" value="Ensembl"/>
</dbReference>
<dbReference type="CDD" id="cd00167">
    <property type="entry name" value="SANT"/>
    <property type="match status" value="3"/>
</dbReference>
<dbReference type="FunFam" id="1.10.10.60:FF:000010">
    <property type="entry name" value="Transcriptional activator Myb isoform A"/>
    <property type="match status" value="1"/>
</dbReference>
<dbReference type="FunFam" id="1.10.10.60:FF:000016">
    <property type="entry name" value="Transcriptional activator Myb isoform A"/>
    <property type="match status" value="1"/>
</dbReference>
<dbReference type="FunFam" id="1.10.10.60:FF:000042">
    <property type="entry name" value="Transcriptional activator Myb isoform A"/>
    <property type="match status" value="1"/>
</dbReference>
<dbReference type="Gene3D" id="1.10.10.60">
    <property type="entry name" value="Homeodomain-like"/>
    <property type="match status" value="3"/>
</dbReference>
<dbReference type="InterPro" id="IPR015395">
    <property type="entry name" value="C-myb_C"/>
</dbReference>
<dbReference type="InterPro" id="IPR009057">
    <property type="entry name" value="Homeodomain-like_sf"/>
</dbReference>
<dbReference type="InterPro" id="IPR017930">
    <property type="entry name" value="Myb_dom"/>
</dbReference>
<dbReference type="InterPro" id="IPR050560">
    <property type="entry name" value="MYB_TF"/>
</dbReference>
<dbReference type="InterPro" id="IPR001005">
    <property type="entry name" value="SANT/Myb"/>
</dbReference>
<dbReference type="InterPro" id="IPR012642">
    <property type="entry name" value="Tscrpt_reg_Wos2-domain"/>
</dbReference>
<dbReference type="PANTHER" id="PTHR45614">
    <property type="entry name" value="MYB PROTEIN-RELATED"/>
    <property type="match status" value="1"/>
</dbReference>
<dbReference type="PANTHER" id="PTHR45614:SF241">
    <property type="entry name" value="MYB-LIKE DNA-BINDING PROTEIN"/>
    <property type="match status" value="1"/>
</dbReference>
<dbReference type="Pfam" id="PF09316">
    <property type="entry name" value="Cmyb_C"/>
    <property type="match status" value="1"/>
</dbReference>
<dbReference type="Pfam" id="PF07988">
    <property type="entry name" value="LMSTEN"/>
    <property type="match status" value="1"/>
</dbReference>
<dbReference type="Pfam" id="PF00249">
    <property type="entry name" value="Myb_DNA-binding"/>
    <property type="match status" value="3"/>
</dbReference>
<dbReference type="SMART" id="SM00717">
    <property type="entry name" value="SANT"/>
    <property type="match status" value="3"/>
</dbReference>
<dbReference type="SUPFAM" id="SSF46689">
    <property type="entry name" value="Homeodomain-like"/>
    <property type="match status" value="2"/>
</dbReference>
<dbReference type="PROSITE" id="PS51294">
    <property type="entry name" value="HTH_MYB"/>
    <property type="match status" value="3"/>
</dbReference>
<evidence type="ECO:0000250" key="1"/>
<evidence type="ECO:0000250" key="2">
    <source>
        <dbReference type="UniProtKB" id="P06876"/>
    </source>
</evidence>
<evidence type="ECO:0000255" key="3">
    <source>
        <dbReference type="PROSITE-ProRule" id="PRU00625"/>
    </source>
</evidence>
<evidence type="ECO:0000256" key="4">
    <source>
        <dbReference type="SAM" id="MobiDB-lite"/>
    </source>
</evidence>
<evidence type="ECO:0000269" key="5">
    <source>
    </source>
</evidence>
<evidence type="ECO:0000269" key="6">
    <source>
    </source>
</evidence>
<evidence type="ECO:0000269" key="7">
    <source>
    </source>
</evidence>
<evidence type="ECO:0000269" key="8">
    <source>
    </source>
</evidence>
<evidence type="ECO:0000303" key="9">
    <source>
    </source>
</evidence>
<evidence type="ECO:0000303" key="10">
    <source>
    </source>
</evidence>
<evidence type="ECO:0000303" key="11">
    <source>
    </source>
</evidence>
<evidence type="ECO:0000303" key="12">
    <source ref="6"/>
</evidence>
<evidence type="ECO:0000305" key="13"/>
<evidence type="ECO:0007744" key="14">
    <source>
    </source>
</evidence>
<evidence type="ECO:0007744" key="15">
    <source>
    </source>
</evidence>
<evidence type="ECO:0007744" key="16">
    <source>
    </source>
</evidence>
<protein>
    <recommendedName>
        <fullName>Transcriptional activator Myb</fullName>
    </recommendedName>
    <alternativeName>
        <fullName>Proto-oncogene c-Myb</fullName>
    </alternativeName>
</protein>
<sequence length="640" mass="72341">MARRPRHSIYSSDEDDEDFEMCDHDYDGLLPKSGKRHLGKTRWTREEDEKLKKLVEQNGTDDWKVIANYLPNRTDVQCQHRWQKVLNPELIKGPWTKEEDQRVIELVQKYGPKRWSVIAKHLKGRIGKQCRERWHNHLNPEVKKTSWTEEEDRIIYQAHKRLGNRWAEIAKLLPGRTDNAIKNHWNSTMRRKVEQEGYLQESSKASQPAVATSFQKNSHLMGFAQAPPTAQLPATGQPTVNNDYSYYHISEAQNVSSHVPYPVALHVNIVNVPQPAAAAIQRHYNDEDPEKEKRIKELELLLMSTENELKGQQVLPTQNHTCSYPGWHSTTIADHTRPHGDSAPVSCLGEHHSTPSLPADPGSLPEESASPARCMIVHQGTILDNVKNLLEFAETLQFIDSFLNTSSNHENSDLEMPSLTSTPLIGHKLTVTTPFHRDQTVKTQKENTVFRTPAIKRSILESSPRTPTPFKHALAAQEIKYGPLKMLPQTPSHLVEDLQDVIKQESDESGIVAEFQENGPPLLKKIKQEVESPTDKSGNFFCSHHWEGDSLNTQLFTQTSPVADAPNILTSSVLMAPASEDEDNVLKAFTVPKNRSLASPLQPCSSTWEPASCGKMEEQMTSSSQARKYVNAFSARTLVM</sequence>
<comment type="function">
    <text>Transcriptional activator; DNA-binding protein that specifically recognize the sequence 5'-YAAC[GT]G-3'. Plays an important role in the control of proliferation and differentiation of hematopoietic progenitor cells.</text>
</comment>
<comment type="subunit">
    <text evidence="1 5 6">Binds MYBBP1A. Interacts with HIPK2, MAF and NLK (By similarity). Binds to HIPK1.</text>
</comment>
<comment type="interaction">
    <interactant intactId="EBI-298355">
        <id>P10242</id>
    </interactant>
    <interactant intactId="EBI-354967">
        <id>Q00610</id>
        <label>CLTC</label>
    </interactant>
    <organismsDiffer>false</organismsDiffer>
    <experiments>4</experiments>
</comment>
<comment type="interaction">
    <interactant intactId="EBI-298355">
        <id>P10242</id>
    </interactant>
    <interactant intactId="EBI-2684336">
        <id>O15083</id>
        <label>ERC2</label>
    </interactant>
    <organismsDiffer>false</organismsDiffer>
    <experiments>2</experiments>
</comment>
<comment type="interaction">
    <interactant intactId="EBI-298355">
        <id>P10242</id>
    </interactant>
    <interactant intactId="EBI-12101100">
        <id>Q9H074-2</id>
        <label>PAIP1</label>
    </interactant>
    <organismsDiffer>false</organismsDiffer>
    <experiments>3</experiments>
</comment>
<comment type="interaction">
    <interactant intactId="EBI-298355">
        <id>P10242</id>
    </interactant>
    <interactant intactId="EBI-80140">
        <id>P63165</id>
        <label>SUMO1</label>
    </interactant>
    <organismsDiffer>false</organismsDiffer>
    <experiments>3</experiments>
</comment>
<comment type="interaction">
    <interactant intactId="EBI-298355">
        <id>P10242</id>
    </interactant>
    <interactant intactId="EBI-473220">
        <id>P61956</id>
        <label>SUMO2</label>
    </interactant>
    <organismsDiffer>false</organismsDiffer>
    <experiments>3</experiments>
</comment>
<comment type="interaction">
    <interactant intactId="EBI-298355">
        <id>P10242</id>
    </interactant>
    <interactant intactId="EBI-1753878">
        <id>P17542</id>
        <label>TAL1</label>
    </interactant>
    <organismsDiffer>false</organismsDiffer>
    <experiments>2</experiments>
</comment>
<comment type="interaction">
    <interactant intactId="EBI-298355">
        <id>P10242</id>
    </interactant>
    <interactant intactId="EBI-746701">
        <id>O60293</id>
        <label>ZFC3H1</label>
    </interactant>
    <organismsDiffer>false</organismsDiffer>
    <experiments>2</experiments>
</comment>
<comment type="subcellular location">
    <subcellularLocation>
        <location evidence="3 6">Nucleus</location>
    </subcellularLocation>
</comment>
<comment type="alternative products">
    <event type="alternative splicing"/>
    <isoform>
        <id>P10242-1</id>
        <name>1</name>
        <sequence type="displayed"/>
    </isoform>
    <isoform>
        <id>P10242-2</id>
        <name>2</name>
        <sequence type="described" ref="VSP_003293"/>
    </isoform>
    <isoform>
        <id>P10242-3</id>
        <name>3</name>
        <sequence type="described" ref="VSP_003294 VSP_003295"/>
    </isoform>
    <isoform>
        <id>P10242-4</id>
        <name>4</name>
        <sequence type="described" ref="VSP_003296"/>
    </isoform>
    <isoform>
        <id>P10242-5</id>
        <name>5</name>
        <sequence type="described" ref="VSP_003297 VSP_003298"/>
    </isoform>
    <isoform>
        <id>P10242-6</id>
        <name>6</name>
        <sequence type="described" ref="VSP_003299"/>
    </isoform>
    <isoform>
        <id>P10242-7</id>
        <name>7</name>
        <sequence type="described" ref="VSP_003293 VSP_003296"/>
    </isoform>
    <isoform>
        <id>P10242-8</id>
        <name>8</name>
        <sequence type="described" ref="VSP_046660"/>
    </isoform>
    <isoform>
        <id>P10242-9</id>
        <name>9</name>
        <sequence type="described" ref="VSP_046658"/>
    </isoform>
    <isoform>
        <id>P10242-10</id>
        <name>10</name>
        <sequence type="described" ref="VSP_046661"/>
    </isoform>
    <isoform>
        <id>P10242-11</id>
        <name>11</name>
        <sequence type="described" ref="VSP_046659"/>
    </isoform>
    <isoform>
        <id>P10242-12</id>
        <name>12</name>
        <sequence type="described" ref="VSP_053389"/>
    </isoform>
</comment>
<comment type="induction">
    <text evidence="8">Negatively regulated by microRNA-155 (miR-155).</text>
</comment>
<comment type="domain">
    <text evidence="7">Comprised of 3 domains; an N-terminal DNA-binding domain, a centrally located transcriptional activation domain and a C-terminal domain involved in transcriptional repression.</text>
</comment>
<comment type="PTM">
    <text evidence="13">Ubiquitinated; mediated by SIAH1 and leading to its subsequent proteasomal degradation.</text>
</comment>
<comment type="PTM">
    <text evidence="2">SUMOylated by TRAF7; leading to MYB transcriptional activity inhibition.</text>
</comment>
<comment type="PTM">
    <text evidence="1">Phosphorylated by NLK on multiple sites, which induces proteasomal degradation.</text>
</comment>
<comment type="PTM">
    <text evidence="6">Phosphorylated by HIPK1. This phosphorylation reduces MYB transcription factor activity but not MYB protein levels.</text>
</comment>
<comment type="miscellaneous">
    <molecule>Isoform 3</molecule>
    <text evidence="13">May be produced at very low levels due to a premature stop codon in the mRNA, leading to nonsense-mediated mRNA decay.</text>
</comment>
<comment type="miscellaneous">
    <molecule>Isoform 5</molecule>
    <text evidence="13">May be produced at very low levels due to a premature stop codon in the mRNA, leading to nonsense-mediated mRNA decay.</text>
</comment>
<comment type="miscellaneous">
    <molecule>Isoform 6</molecule>
    <text evidence="13">May be produced at very low levels due to a premature stop codon in the mRNA, leading to nonsense-mediated mRNA decay.</text>
</comment>
<comment type="online information" name="Atlas of Genetics and Cytogenetics in Oncology and Haematology">
    <link uri="https://atlasgeneticsoncology.org/gene/41466/MYB"/>
</comment>
<reference key="1">
    <citation type="journal article" date="1986" name="Proc. Natl. Acad. Sci. U.S.A.">
        <title>Human c-myb protooncogene: nucleotide sequence of cDNA and organization of the genomic locus.</title>
        <authorList>
            <person name="Majello B."/>
            <person name="Kenyon L.C."/>
            <person name="Dalla-Favera R."/>
        </authorList>
    </citation>
    <scope>NUCLEOTIDE SEQUENCE [MRNA] (ISOFORM 1)</scope>
</reference>
<reference key="2">
    <citation type="journal article" date="1990" name="Oncogene">
        <title>Alternative splicing of the human c-myb gene.</title>
        <authorList>
            <person name="Westin E.H."/>
            <person name="Gorse K.M."/>
            <person name="Clarke M.F."/>
        </authorList>
    </citation>
    <scope>NUCLEOTIDE SEQUENCE [MRNA] (ISOFORM 2)</scope>
</reference>
<reference key="3">
    <citation type="journal article" date="2004" name="BMC Genomics">
        <title>Genome annotation of a 1.5 Mb region of human chromosome 6q23 encompassing a quantitative trait locus for fetal hemoglobin expression in adults.</title>
        <authorList>
            <person name="Close J.P."/>
            <person name="Game L."/>
            <person name="Clark B."/>
            <person name="Bergounioux J."/>
            <person name="Gerovassili A."/>
            <person name="Thein S.L."/>
        </authorList>
    </citation>
    <scope>NUCLEOTIDE SEQUENCE [MRNA] (ISOFORMS 2 AND 4)</scope>
</reference>
<reference key="4">
    <citation type="submission" date="1995-03" db="EMBL/GenBank/DDBJ databases">
        <title>Characterization of the complete sequence structure of the human c-myb gene.</title>
        <authorList>
            <person name="Westin E.H."/>
            <person name="Gorse K.M."/>
        </authorList>
    </citation>
    <scope>NUCLEOTIDE SEQUENCE [GENOMIC DNA] (ISOFORMS 1; 3; 4; 5 AND 6)</scope>
    <source>
        <tissue>Liver</tissue>
        <tissue>Placenta</tissue>
    </source>
</reference>
<reference key="5">
    <citation type="submission" date="1998-11" db="EMBL/GenBank/DDBJ databases">
        <authorList>
            <person name="Gaillard C."/>
            <person name="Perbal B."/>
        </authorList>
    </citation>
    <scope>NUCLEOTIDE SEQUENCE [MRNA] (ISOFORM 1)</scope>
</reference>
<reference key="6">
    <citation type="submission" date="2004-10" db="EMBL/GenBank/DDBJ databases">
        <title>Complex RNA splicing produces multiple forms of c-Myb with distinct transcriptional activities.</title>
        <authorList>
            <person name="O'Rourke J.P. Jr."/>
            <person name="Ness S.A."/>
        </authorList>
    </citation>
    <scope>NUCLEOTIDE SEQUENCE [MRNA] (ISOFORMS 7; 8; 9; 10 AND 11)</scope>
    <scope>ALTERNATIVE SPLICING</scope>
</reference>
<reference key="7">
    <citation type="journal article" date="2003" name="Nature">
        <title>The DNA sequence and analysis of human chromosome 6.</title>
        <authorList>
            <person name="Mungall A.J."/>
            <person name="Palmer S.A."/>
            <person name="Sims S.K."/>
            <person name="Edwards C.A."/>
            <person name="Ashurst J.L."/>
            <person name="Wilming L."/>
            <person name="Jones M.C."/>
            <person name="Horton R."/>
            <person name="Hunt S.E."/>
            <person name="Scott C.E."/>
            <person name="Gilbert J.G.R."/>
            <person name="Clamp M.E."/>
            <person name="Bethel G."/>
            <person name="Milne S."/>
            <person name="Ainscough R."/>
            <person name="Almeida J.P."/>
            <person name="Ambrose K.D."/>
            <person name="Andrews T.D."/>
            <person name="Ashwell R.I.S."/>
            <person name="Babbage A.K."/>
            <person name="Bagguley C.L."/>
            <person name="Bailey J."/>
            <person name="Banerjee R."/>
            <person name="Barker D.J."/>
            <person name="Barlow K.F."/>
            <person name="Bates K."/>
            <person name="Beare D.M."/>
            <person name="Beasley H."/>
            <person name="Beasley O."/>
            <person name="Bird C.P."/>
            <person name="Blakey S.E."/>
            <person name="Bray-Allen S."/>
            <person name="Brook J."/>
            <person name="Brown A.J."/>
            <person name="Brown J.Y."/>
            <person name="Burford D.C."/>
            <person name="Burrill W."/>
            <person name="Burton J."/>
            <person name="Carder C."/>
            <person name="Carter N.P."/>
            <person name="Chapman J.C."/>
            <person name="Clark S.Y."/>
            <person name="Clark G."/>
            <person name="Clee C.M."/>
            <person name="Clegg S."/>
            <person name="Cobley V."/>
            <person name="Collier R.E."/>
            <person name="Collins J.E."/>
            <person name="Colman L.K."/>
            <person name="Corby N.R."/>
            <person name="Coville G.J."/>
            <person name="Culley K.M."/>
            <person name="Dhami P."/>
            <person name="Davies J."/>
            <person name="Dunn M."/>
            <person name="Earthrowl M.E."/>
            <person name="Ellington A.E."/>
            <person name="Evans K.A."/>
            <person name="Faulkner L."/>
            <person name="Francis M.D."/>
            <person name="Frankish A."/>
            <person name="Frankland J."/>
            <person name="French L."/>
            <person name="Garner P."/>
            <person name="Garnett J."/>
            <person name="Ghori M.J."/>
            <person name="Gilby L.M."/>
            <person name="Gillson C.J."/>
            <person name="Glithero R.J."/>
            <person name="Grafham D.V."/>
            <person name="Grant M."/>
            <person name="Gribble S."/>
            <person name="Griffiths C."/>
            <person name="Griffiths M.N.D."/>
            <person name="Hall R."/>
            <person name="Halls K.S."/>
            <person name="Hammond S."/>
            <person name="Harley J.L."/>
            <person name="Hart E.A."/>
            <person name="Heath P.D."/>
            <person name="Heathcott R."/>
            <person name="Holmes S.J."/>
            <person name="Howden P.J."/>
            <person name="Howe K.L."/>
            <person name="Howell G.R."/>
            <person name="Huckle E."/>
            <person name="Humphray S.J."/>
            <person name="Humphries M.D."/>
            <person name="Hunt A.R."/>
            <person name="Johnson C.M."/>
            <person name="Joy A.A."/>
            <person name="Kay M."/>
            <person name="Keenan S.J."/>
            <person name="Kimberley A.M."/>
            <person name="King A."/>
            <person name="Laird G.K."/>
            <person name="Langford C."/>
            <person name="Lawlor S."/>
            <person name="Leongamornlert D.A."/>
            <person name="Leversha M."/>
            <person name="Lloyd C.R."/>
            <person name="Lloyd D.M."/>
            <person name="Loveland J.E."/>
            <person name="Lovell J."/>
            <person name="Martin S."/>
            <person name="Mashreghi-Mohammadi M."/>
            <person name="Maslen G.L."/>
            <person name="Matthews L."/>
            <person name="McCann O.T."/>
            <person name="McLaren S.J."/>
            <person name="McLay K."/>
            <person name="McMurray A."/>
            <person name="Moore M.J.F."/>
            <person name="Mullikin J.C."/>
            <person name="Niblett D."/>
            <person name="Nickerson T."/>
            <person name="Novik K.L."/>
            <person name="Oliver K."/>
            <person name="Overton-Larty E.K."/>
            <person name="Parker A."/>
            <person name="Patel R."/>
            <person name="Pearce A.V."/>
            <person name="Peck A.I."/>
            <person name="Phillimore B.J.C.T."/>
            <person name="Phillips S."/>
            <person name="Plumb R.W."/>
            <person name="Porter K.M."/>
            <person name="Ramsey Y."/>
            <person name="Ranby S.A."/>
            <person name="Rice C.M."/>
            <person name="Ross M.T."/>
            <person name="Searle S.M."/>
            <person name="Sehra H.K."/>
            <person name="Sheridan E."/>
            <person name="Skuce C.D."/>
            <person name="Smith S."/>
            <person name="Smith M."/>
            <person name="Spraggon L."/>
            <person name="Squares S.L."/>
            <person name="Steward C.A."/>
            <person name="Sycamore N."/>
            <person name="Tamlyn-Hall G."/>
            <person name="Tester J."/>
            <person name="Theaker A.J."/>
            <person name="Thomas D.W."/>
            <person name="Thorpe A."/>
            <person name="Tracey A."/>
            <person name="Tromans A."/>
            <person name="Tubby B."/>
            <person name="Wall M."/>
            <person name="Wallis J.M."/>
            <person name="West A.P."/>
            <person name="White S.S."/>
            <person name="Whitehead S.L."/>
            <person name="Whittaker H."/>
            <person name="Wild A."/>
            <person name="Willey D.J."/>
            <person name="Wilmer T.E."/>
            <person name="Wood J.M."/>
            <person name="Wray P.W."/>
            <person name="Wyatt J.C."/>
            <person name="Young L."/>
            <person name="Younger R.M."/>
            <person name="Bentley D.R."/>
            <person name="Coulson A."/>
            <person name="Durbin R.M."/>
            <person name="Hubbard T."/>
            <person name="Sulston J.E."/>
            <person name="Dunham I."/>
            <person name="Rogers J."/>
            <person name="Beck S."/>
        </authorList>
    </citation>
    <scope>NUCLEOTIDE SEQUENCE [LARGE SCALE GENOMIC DNA]</scope>
</reference>
<reference key="8">
    <citation type="submission" date="2005-09" db="EMBL/GenBank/DDBJ databases">
        <authorList>
            <person name="Mural R.J."/>
            <person name="Istrail S."/>
            <person name="Sutton G.G."/>
            <person name="Florea L."/>
            <person name="Halpern A.L."/>
            <person name="Mobarry C.M."/>
            <person name="Lippert R."/>
            <person name="Walenz B."/>
            <person name="Shatkay H."/>
            <person name="Dew I."/>
            <person name="Miller J.R."/>
            <person name="Flanigan M.J."/>
            <person name="Edwards N.J."/>
            <person name="Bolanos R."/>
            <person name="Fasulo D."/>
            <person name="Halldorsson B.V."/>
            <person name="Hannenhalli S."/>
            <person name="Turner R."/>
            <person name="Yooseph S."/>
            <person name="Lu F."/>
            <person name="Nusskern D.R."/>
            <person name="Shue B.C."/>
            <person name="Zheng X.H."/>
            <person name="Zhong F."/>
            <person name="Delcher A.L."/>
            <person name="Huson D.H."/>
            <person name="Kravitz S.A."/>
            <person name="Mouchard L."/>
            <person name="Reinert K."/>
            <person name="Remington K.A."/>
            <person name="Clark A.G."/>
            <person name="Waterman M.S."/>
            <person name="Eichler E.E."/>
            <person name="Adams M.D."/>
            <person name="Hunkapiller M.W."/>
            <person name="Myers E.W."/>
            <person name="Venter J.C."/>
        </authorList>
    </citation>
    <scope>NUCLEOTIDE SEQUENCE [LARGE SCALE GENOMIC DNA]</scope>
</reference>
<reference key="9">
    <citation type="journal article" date="2004" name="Genome Res.">
        <title>The status, quality, and expansion of the NIH full-length cDNA project: the Mammalian Gene Collection (MGC).</title>
        <authorList>
            <consortium name="The MGC Project Team"/>
        </authorList>
    </citation>
    <scope>NUCLEOTIDE SEQUENCE [LARGE SCALE MRNA] (ISOFORM 1)</scope>
    <source>
        <tissue>Testis</tissue>
    </source>
</reference>
<reference key="10">
    <citation type="journal article" date="1994" name="Oncogene">
        <title>Identification of a second promoter in the human c-myb proto-oncogene.</title>
        <authorList>
            <person name="Jacobs S.M."/>
            <person name="Gorse K.M."/>
            <person name="Westin E.H."/>
        </authorList>
    </citation>
    <scope>NUCLEOTIDE SEQUENCE [MRNA] OF 1-47 (ISOFORM 1)</scope>
</reference>
<reference key="11">
    <citation type="journal article" date="1991" name="Mol. Cell. Biol.">
        <title>Positive autoregulation of c-myb expression via Myb binding sites in the 5' flanking region of the human c-myb gene.</title>
        <authorList>
            <person name="Nicolaides N.C."/>
            <person name="Gualdi R."/>
            <person name="Casadevall C."/>
            <person name="Manzella L."/>
            <person name="Calabretta B."/>
        </authorList>
    </citation>
    <scope>NUCLEOTIDE SEQUENCE [GENOMIC DNA] OF 1-7</scope>
</reference>
<reference key="12">
    <citation type="journal article" date="1986" name="Science">
        <title>Studies of the human c-myb gene and its product in human acute leukemias.</title>
        <authorList>
            <person name="Slamon D.J."/>
            <person name="Boone T.C."/>
            <person name="Murdock D.C."/>
            <person name="Keith D.E."/>
            <person name="Press M.F."/>
            <person name="Larson R.A."/>
            <person name="Souza L.M."/>
        </authorList>
    </citation>
    <scope>NUCLEOTIDE SEQUENCE [MRNA] OF 47-640 (ISOFORMS 1 AND 12)</scope>
</reference>
<reference key="13">
    <citation type="journal article" date="1989" name="Oncogene">
        <title>Identification of alternatively spliced transcripts for human c-myb: molecular cloning and sequence analysis of human c-myb exon 9A sequences.</title>
        <authorList>
            <person name="Dasgupta P."/>
            <person name="Reddy E.P."/>
        </authorList>
    </citation>
    <scope>PARTIAL NUCLEOTIDE SEQUENCE [MRNA] (ISOFORM 4)</scope>
</reference>
<reference key="14">
    <citation type="journal article" date="1990" name="Oncogene">
        <title>Transcriptional activation by human c-myb and v-myb genes.</title>
        <authorList>
            <person name="Kalkbrenner F."/>
            <person name="Guehmann S."/>
            <person name="Moelling K."/>
        </authorList>
    </citation>
    <scope>DOMAIN</scope>
</reference>
<reference key="15">
    <citation type="journal article" date="2000" name="J. Biol. Chem.">
        <title>p53 suppresses the c-Myb-induced activation of heat shock transcription factor 3.</title>
        <authorList>
            <person name="Tanikawa J."/>
            <person name="Ichikawa-Iwata E."/>
            <person name="Kanei-Ishii C."/>
            <person name="Nakai A."/>
            <person name="Matsuzawa S."/>
            <person name="Reed J.C."/>
            <person name="Ishii S."/>
        </authorList>
    </citation>
    <scope>INTERACTION WITH SIAH1</scope>
    <scope>DEGRADATION</scope>
</reference>
<reference key="16">
    <citation type="journal article" date="2009" name="Biochem. Biophys. Res. Commun.">
        <title>HIPK1 interacts with c-Myb and modulates its activity through phosphorylation.</title>
        <authorList>
            <person name="Matre V."/>
            <person name="Nordgaard O."/>
            <person name="Alm-Kristiansen A.H."/>
            <person name="Ledsaak M."/>
            <person name="Gabrielsen O.S."/>
        </authorList>
    </citation>
    <scope>PHOSPHORYLATION BY HIPK1</scope>
    <scope>INTERACTION WITH HIPK1</scope>
    <scope>SUBCELLULAR LOCATION</scope>
</reference>
<reference key="17">
    <citation type="journal article" date="2009" name="Science">
        <title>Lysine acetylation targets protein complexes and co-regulates major cellular functions.</title>
        <authorList>
            <person name="Choudhary C."/>
            <person name="Kumar C."/>
            <person name="Gnad F."/>
            <person name="Nielsen M.L."/>
            <person name="Rehman M."/>
            <person name="Walther T.C."/>
            <person name="Olsen J.V."/>
            <person name="Mann M."/>
        </authorList>
    </citation>
    <scope>ACETYLATION [LARGE SCALE ANALYSIS] AT LYS-471 AND LYS-480</scope>
    <scope>IDENTIFICATION BY MASS SPECTROMETRY [LARGE SCALE ANALYSIS]</scope>
</reference>
<reference key="18">
    <citation type="journal article" date="2012" name="J. Exp. Med.">
        <title>BCL6 positively regulates AID and germinal center gene expression via repression of miR-155.</title>
        <authorList>
            <person name="Basso K."/>
            <person name="Schneider C."/>
            <person name="Shen Q."/>
            <person name="Holmes A.B."/>
            <person name="Setty M."/>
            <person name="Leslie C."/>
            <person name="Dalla-Favera R."/>
        </authorList>
    </citation>
    <scope>INDUCTION</scope>
</reference>
<reference key="19">
    <citation type="journal article" date="2013" name="J. Proteome Res.">
        <title>Toward a comprehensive characterization of a human cancer cell phosphoproteome.</title>
        <authorList>
            <person name="Zhou H."/>
            <person name="Di Palma S."/>
            <person name="Preisinger C."/>
            <person name="Peng M."/>
            <person name="Polat A.N."/>
            <person name="Heck A.J."/>
            <person name="Mohammed S."/>
        </authorList>
    </citation>
    <scope>PHOSPHORYLATION [LARGE SCALE ANALYSIS] AT SER-532 AND THR-534</scope>
    <scope>IDENTIFICATION BY MASS SPECTROMETRY [LARGE SCALE ANALYSIS]</scope>
    <source>
        <tissue>Erythroleukemia</tissue>
    </source>
</reference>
<reference key="20">
    <citation type="journal article" date="2017" name="Nat. Struct. Mol. Biol.">
        <title>Site-specific mapping of the human SUMO proteome reveals co-modification with phosphorylation.</title>
        <authorList>
            <person name="Hendriks I.A."/>
            <person name="Lyon D."/>
            <person name="Young C."/>
            <person name="Jensen L.J."/>
            <person name="Vertegaal A.C."/>
            <person name="Nielsen M.L."/>
        </authorList>
    </citation>
    <scope>SUMOYLATION [LARGE SCALE ANALYSIS] AT LYS-480</scope>
    <scope>IDENTIFICATION BY MASS SPECTROMETRY [LARGE SCALE ANALYSIS]</scope>
</reference>
<accession>P10242</accession>
<accession>E9PI07</accession>
<accession>E9PLZ5</accession>
<accession>E9PNA4</accession>
<accession>E9PNL6</accession>
<accession>E9PRS2</accession>
<accession>P78391</accession>
<accession>P78392</accession>
<accession>P78525</accession>
<accession>P78526</accession>
<accession>Q14023</accession>
<accession>Q14024</accession>
<accession>Q708E4</accession>
<accession>Q708E7</accession>
<accession>Q9UE83</accession>
<name>MYB_HUMAN</name>
<organism>
    <name type="scientific">Homo sapiens</name>
    <name type="common">Human</name>
    <dbReference type="NCBI Taxonomy" id="9606"/>
    <lineage>
        <taxon>Eukaryota</taxon>
        <taxon>Metazoa</taxon>
        <taxon>Chordata</taxon>
        <taxon>Craniata</taxon>
        <taxon>Vertebrata</taxon>
        <taxon>Euteleostomi</taxon>
        <taxon>Mammalia</taxon>
        <taxon>Eutheria</taxon>
        <taxon>Euarchontoglires</taxon>
        <taxon>Primates</taxon>
        <taxon>Haplorrhini</taxon>
        <taxon>Catarrhini</taxon>
        <taxon>Hominidae</taxon>
        <taxon>Homo</taxon>
    </lineage>
</organism>